<name>RPOC_STAS1</name>
<evidence type="ECO:0000255" key="1">
    <source>
        <dbReference type="HAMAP-Rule" id="MF_01322"/>
    </source>
</evidence>
<comment type="function">
    <text evidence="1">DNA-dependent RNA polymerase catalyzes the transcription of DNA into RNA using the four ribonucleoside triphosphates as substrates.</text>
</comment>
<comment type="catalytic activity">
    <reaction evidence="1">
        <text>RNA(n) + a ribonucleoside 5'-triphosphate = RNA(n+1) + diphosphate</text>
        <dbReference type="Rhea" id="RHEA:21248"/>
        <dbReference type="Rhea" id="RHEA-COMP:14527"/>
        <dbReference type="Rhea" id="RHEA-COMP:17342"/>
        <dbReference type="ChEBI" id="CHEBI:33019"/>
        <dbReference type="ChEBI" id="CHEBI:61557"/>
        <dbReference type="ChEBI" id="CHEBI:140395"/>
        <dbReference type="EC" id="2.7.7.6"/>
    </reaction>
</comment>
<comment type="cofactor">
    <cofactor evidence="1">
        <name>Mg(2+)</name>
        <dbReference type="ChEBI" id="CHEBI:18420"/>
    </cofactor>
    <text evidence="1">Binds 1 Mg(2+) ion per subunit.</text>
</comment>
<comment type="cofactor">
    <cofactor evidence="1">
        <name>Zn(2+)</name>
        <dbReference type="ChEBI" id="CHEBI:29105"/>
    </cofactor>
    <text evidence="1">Binds 2 Zn(2+) ions per subunit.</text>
</comment>
<comment type="subunit">
    <text evidence="1">The RNAP catalytic core consists of 2 alpha, 1 beta, 1 beta' and 1 omega subunit. When a sigma factor is associated with the core the holoenzyme is formed, which can initiate transcription.</text>
</comment>
<comment type="similarity">
    <text evidence="1">Belongs to the RNA polymerase beta' chain family.</text>
</comment>
<reference key="1">
    <citation type="journal article" date="2005" name="Proc. Natl. Acad. Sci. U.S.A.">
        <title>Whole genome sequence of Staphylococcus saprophyticus reveals the pathogenesis of uncomplicated urinary tract infection.</title>
        <authorList>
            <person name="Kuroda M."/>
            <person name="Yamashita A."/>
            <person name="Hirakawa H."/>
            <person name="Kumano M."/>
            <person name="Morikawa K."/>
            <person name="Higashide M."/>
            <person name="Maruyama A."/>
            <person name="Inose Y."/>
            <person name="Matoba K."/>
            <person name="Toh H."/>
            <person name="Kuhara S."/>
            <person name="Hattori M."/>
            <person name="Ohta T."/>
        </authorList>
    </citation>
    <scope>NUCLEOTIDE SEQUENCE [LARGE SCALE GENOMIC DNA]</scope>
    <source>
        <strain>ATCC 15305 / DSM 20229 / NCIMB 8711 / NCTC 7292 / S-41</strain>
    </source>
</reference>
<proteinExistence type="inferred from homology"/>
<sequence>MIDVNNFHYMKIGLASPEKIRSWSFGEVKKPETINYRTLKPEKDGLFCERIFGPTKDWECSCGKYKRVRYKGMVCDRCGVEVTKSKVRRERMGHIELAAPVSHIWYFKGIPSRMGLLLDMSPRALEEVIYFASYVVVNPGPTGLEKKTLLSEAEFREYYDKFPGKFTAKMGAEGIKELLEEIDLDAELKHLRDELESATGQRLTRAIKRLEVVESFRHSGNNPAWMILDVLPIIPPEIRPMVQLDGGRFATSDLNDLYRRVINRNNRLKRLLDLGAPGIIVQNEKRMLQEAVDALIDNGRRGRPVTGPGNRPLKSLSHMLKGKQGRFRQNLLGKRVDYSGRSVIAVGPSLKMYQCGLPKEMALELFKPFIMKELVQREIATNIKNAKSKIERMDDEVWDVLEDVIKEHPVLLNRAPTLHRLGIQAFEPTLVEGRAIRLHPLATTAYNADFDGDQMAVHVPLSKEAQAEARMLMLAAQNILNPKDGKPVVTPSQDMVLGNYYLTLERKEAVNTGTIYNDTNEVLKAYANGYVHLHTRIGVHAASFNNPTFTEEQNKKILLTSVGKVIFNEIIPDSFAYINEPTQTNLENKTPEKYFIAPTEIGEEGLKAYFDEQPLIKPFNKNFLGNVIAEVFNRFSITDTSMMLDRMKDLGFKFSSKAGITVGVSDIVVLPDKQDILDEHEKLVEKVTKQFNRGLITDFERYNAVIEIWTDAKDQIQNELMGSLEKTNPIFMMSDSGARGNASNFTQLAGMRGLMAAPSGEIIELPITSSFREGLTVLEYFISTHGARKGLADTALKTADSGYLTRRLVDVAQDVIVREEDCGTDRGLLVSDIKEGTEMIEPFIERIEGRYSKETIRHPETNEVIVNPDELVTAEIAKKITDAGIEEMYIRSAFTCNTRHGVCEKCYGKNLATGEKVEVGEAVGTIAAQSIGEPGTQLTMRTFHTGGVAGSDITQGLPRIQEIFEARNPKGQAVITEIEGVVDDIKLAKDRQQEIVIKGANETKSYLASGTSRLKVEVGQSVERGEVLTEGSIEPKNYLSVSGLNATESYLLKEVQKVYRMQGVEIDDKHVEVMVRQMLRKVRIIEAGDTKLLPGSLVDIHNFTDANREAFKERKRPATAKPVLLGITKASLETESFLSAASFQETTRVLTDAAIKGKRDNLLGLKENVIIGKLIPAGTGMRRYRDVEYDKAAPETEIVEEVQTTEI</sequence>
<accession>Q49V53</accession>
<dbReference type="EC" id="2.7.7.6" evidence="1"/>
<dbReference type="EMBL" id="AP008934">
    <property type="protein sequence ID" value="BAE19357.1"/>
    <property type="molecule type" value="Genomic_DNA"/>
</dbReference>
<dbReference type="SMR" id="Q49V53"/>
<dbReference type="KEGG" id="ssp:SSP2212"/>
<dbReference type="PATRIC" id="fig|342451.11.peg.2203"/>
<dbReference type="eggNOG" id="COG0086">
    <property type="taxonomic scope" value="Bacteria"/>
</dbReference>
<dbReference type="HOGENOM" id="CLU_000524_3_1_9"/>
<dbReference type="OrthoDB" id="9815296at2"/>
<dbReference type="Proteomes" id="UP000006371">
    <property type="component" value="Chromosome"/>
</dbReference>
<dbReference type="GO" id="GO:0000428">
    <property type="term" value="C:DNA-directed RNA polymerase complex"/>
    <property type="evidence" value="ECO:0007669"/>
    <property type="project" value="UniProtKB-KW"/>
</dbReference>
<dbReference type="GO" id="GO:0003677">
    <property type="term" value="F:DNA binding"/>
    <property type="evidence" value="ECO:0007669"/>
    <property type="project" value="UniProtKB-UniRule"/>
</dbReference>
<dbReference type="GO" id="GO:0003899">
    <property type="term" value="F:DNA-directed RNA polymerase activity"/>
    <property type="evidence" value="ECO:0007669"/>
    <property type="project" value="UniProtKB-UniRule"/>
</dbReference>
<dbReference type="GO" id="GO:0000287">
    <property type="term" value="F:magnesium ion binding"/>
    <property type="evidence" value="ECO:0007669"/>
    <property type="project" value="UniProtKB-UniRule"/>
</dbReference>
<dbReference type="GO" id="GO:0008270">
    <property type="term" value="F:zinc ion binding"/>
    <property type="evidence" value="ECO:0007669"/>
    <property type="project" value="UniProtKB-UniRule"/>
</dbReference>
<dbReference type="GO" id="GO:0006351">
    <property type="term" value="P:DNA-templated transcription"/>
    <property type="evidence" value="ECO:0007669"/>
    <property type="project" value="UniProtKB-UniRule"/>
</dbReference>
<dbReference type="CDD" id="cd02655">
    <property type="entry name" value="RNAP_beta'_C"/>
    <property type="match status" value="1"/>
</dbReference>
<dbReference type="CDD" id="cd01609">
    <property type="entry name" value="RNAP_beta'_N"/>
    <property type="match status" value="1"/>
</dbReference>
<dbReference type="FunFam" id="1.10.132.30:FF:000003">
    <property type="entry name" value="DNA-directed RNA polymerase subunit beta"/>
    <property type="match status" value="1"/>
</dbReference>
<dbReference type="FunFam" id="1.10.150.390:FF:000002">
    <property type="entry name" value="DNA-directed RNA polymerase subunit beta"/>
    <property type="match status" value="1"/>
</dbReference>
<dbReference type="FunFam" id="4.10.860.120:FF:000001">
    <property type="entry name" value="DNA-directed RNA polymerase subunit beta"/>
    <property type="match status" value="1"/>
</dbReference>
<dbReference type="Gene3D" id="1.10.132.30">
    <property type="match status" value="1"/>
</dbReference>
<dbReference type="Gene3D" id="1.10.150.390">
    <property type="match status" value="1"/>
</dbReference>
<dbReference type="Gene3D" id="1.10.1790.20">
    <property type="match status" value="1"/>
</dbReference>
<dbReference type="Gene3D" id="1.10.40.90">
    <property type="match status" value="1"/>
</dbReference>
<dbReference type="Gene3D" id="2.40.40.20">
    <property type="match status" value="1"/>
</dbReference>
<dbReference type="Gene3D" id="2.40.50.100">
    <property type="match status" value="1"/>
</dbReference>
<dbReference type="Gene3D" id="4.10.860.120">
    <property type="entry name" value="RNA polymerase II, clamp domain"/>
    <property type="match status" value="1"/>
</dbReference>
<dbReference type="Gene3D" id="1.10.274.100">
    <property type="entry name" value="RNA polymerase Rpb1, domain 3"/>
    <property type="match status" value="1"/>
</dbReference>
<dbReference type="HAMAP" id="MF_01322">
    <property type="entry name" value="RNApol_bact_RpoC"/>
    <property type="match status" value="1"/>
</dbReference>
<dbReference type="InterPro" id="IPR045867">
    <property type="entry name" value="DNA-dir_RpoC_beta_prime"/>
</dbReference>
<dbReference type="InterPro" id="IPR012754">
    <property type="entry name" value="DNA-dir_RpoC_beta_prime_bact"/>
</dbReference>
<dbReference type="InterPro" id="IPR000722">
    <property type="entry name" value="RNA_pol_asu"/>
</dbReference>
<dbReference type="InterPro" id="IPR006592">
    <property type="entry name" value="RNA_pol_N"/>
</dbReference>
<dbReference type="InterPro" id="IPR007080">
    <property type="entry name" value="RNA_pol_Rpb1_1"/>
</dbReference>
<dbReference type="InterPro" id="IPR007066">
    <property type="entry name" value="RNA_pol_Rpb1_3"/>
</dbReference>
<dbReference type="InterPro" id="IPR042102">
    <property type="entry name" value="RNA_pol_Rpb1_3_sf"/>
</dbReference>
<dbReference type="InterPro" id="IPR007083">
    <property type="entry name" value="RNA_pol_Rpb1_4"/>
</dbReference>
<dbReference type="InterPro" id="IPR007081">
    <property type="entry name" value="RNA_pol_Rpb1_5"/>
</dbReference>
<dbReference type="InterPro" id="IPR044893">
    <property type="entry name" value="RNA_pol_Rpb1_clamp_domain"/>
</dbReference>
<dbReference type="InterPro" id="IPR038120">
    <property type="entry name" value="Rpb1_funnel_sf"/>
</dbReference>
<dbReference type="NCBIfam" id="TIGR02386">
    <property type="entry name" value="rpoC_TIGR"/>
    <property type="match status" value="1"/>
</dbReference>
<dbReference type="PANTHER" id="PTHR19376">
    <property type="entry name" value="DNA-DIRECTED RNA POLYMERASE"/>
    <property type="match status" value="1"/>
</dbReference>
<dbReference type="PANTHER" id="PTHR19376:SF54">
    <property type="entry name" value="DNA-DIRECTED RNA POLYMERASE SUBUNIT BETA"/>
    <property type="match status" value="1"/>
</dbReference>
<dbReference type="Pfam" id="PF04997">
    <property type="entry name" value="RNA_pol_Rpb1_1"/>
    <property type="match status" value="1"/>
</dbReference>
<dbReference type="Pfam" id="PF00623">
    <property type="entry name" value="RNA_pol_Rpb1_2"/>
    <property type="match status" value="1"/>
</dbReference>
<dbReference type="Pfam" id="PF04983">
    <property type="entry name" value="RNA_pol_Rpb1_3"/>
    <property type="match status" value="1"/>
</dbReference>
<dbReference type="Pfam" id="PF05000">
    <property type="entry name" value="RNA_pol_Rpb1_4"/>
    <property type="match status" value="1"/>
</dbReference>
<dbReference type="Pfam" id="PF04998">
    <property type="entry name" value="RNA_pol_Rpb1_5"/>
    <property type="match status" value="1"/>
</dbReference>
<dbReference type="SMART" id="SM00663">
    <property type="entry name" value="RPOLA_N"/>
    <property type="match status" value="1"/>
</dbReference>
<dbReference type="SUPFAM" id="SSF64484">
    <property type="entry name" value="beta and beta-prime subunits of DNA dependent RNA-polymerase"/>
    <property type="match status" value="1"/>
</dbReference>
<organism>
    <name type="scientific">Staphylococcus saprophyticus subsp. saprophyticus (strain ATCC 15305 / DSM 20229 / NCIMB 8711 / NCTC 7292 / S-41)</name>
    <dbReference type="NCBI Taxonomy" id="342451"/>
    <lineage>
        <taxon>Bacteria</taxon>
        <taxon>Bacillati</taxon>
        <taxon>Bacillota</taxon>
        <taxon>Bacilli</taxon>
        <taxon>Bacillales</taxon>
        <taxon>Staphylococcaceae</taxon>
        <taxon>Staphylococcus</taxon>
    </lineage>
</organism>
<protein>
    <recommendedName>
        <fullName evidence="1">DNA-directed RNA polymerase subunit beta'</fullName>
        <shortName evidence="1">RNAP subunit beta'</shortName>
        <ecNumber evidence="1">2.7.7.6</ecNumber>
    </recommendedName>
    <alternativeName>
        <fullName evidence="1">RNA polymerase subunit beta'</fullName>
    </alternativeName>
    <alternativeName>
        <fullName evidence="1">Transcriptase subunit beta'</fullName>
    </alternativeName>
</protein>
<feature type="chain" id="PRO_0000067802" description="DNA-directed RNA polymerase subunit beta'">
    <location>
        <begin position="1"/>
        <end position="1207"/>
    </location>
</feature>
<feature type="binding site" evidence="1">
    <location>
        <position position="60"/>
    </location>
    <ligand>
        <name>Zn(2+)</name>
        <dbReference type="ChEBI" id="CHEBI:29105"/>
        <label>1</label>
    </ligand>
</feature>
<feature type="binding site" evidence="1">
    <location>
        <position position="62"/>
    </location>
    <ligand>
        <name>Zn(2+)</name>
        <dbReference type="ChEBI" id="CHEBI:29105"/>
        <label>1</label>
    </ligand>
</feature>
<feature type="binding site" evidence="1">
    <location>
        <position position="75"/>
    </location>
    <ligand>
        <name>Zn(2+)</name>
        <dbReference type="ChEBI" id="CHEBI:29105"/>
        <label>1</label>
    </ligand>
</feature>
<feature type="binding site" evidence="1">
    <location>
        <position position="78"/>
    </location>
    <ligand>
        <name>Zn(2+)</name>
        <dbReference type="ChEBI" id="CHEBI:29105"/>
        <label>1</label>
    </ligand>
</feature>
<feature type="binding site" evidence="1">
    <location>
        <position position="449"/>
    </location>
    <ligand>
        <name>Mg(2+)</name>
        <dbReference type="ChEBI" id="CHEBI:18420"/>
    </ligand>
</feature>
<feature type="binding site" evidence="1">
    <location>
        <position position="451"/>
    </location>
    <ligand>
        <name>Mg(2+)</name>
        <dbReference type="ChEBI" id="CHEBI:18420"/>
    </ligand>
</feature>
<feature type="binding site" evidence="1">
    <location>
        <position position="453"/>
    </location>
    <ligand>
        <name>Mg(2+)</name>
        <dbReference type="ChEBI" id="CHEBI:18420"/>
    </ligand>
</feature>
<feature type="binding site" evidence="1">
    <location>
        <position position="822"/>
    </location>
    <ligand>
        <name>Zn(2+)</name>
        <dbReference type="ChEBI" id="CHEBI:29105"/>
        <label>2</label>
    </ligand>
</feature>
<feature type="binding site" evidence="1">
    <location>
        <position position="896"/>
    </location>
    <ligand>
        <name>Zn(2+)</name>
        <dbReference type="ChEBI" id="CHEBI:29105"/>
        <label>2</label>
    </ligand>
</feature>
<feature type="binding site" evidence="1">
    <location>
        <position position="903"/>
    </location>
    <ligand>
        <name>Zn(2+)</name>
        <dbReference type="ChEBI" id="CHEBI:29105"/>
        <label>2</label>
    </ligand>
</feature>
<feature type="binding site" evidence="1">
    <location>
        <position position="906"/>
    </location>
    <ligand>
        <name>Zn(2+)</name>
        <dbReference type="ChEBI" id="CHEBI:29105"/>
        <label>2</label>
    </ligand>
</feature>
<keyword id="KW-0240">DNA-directed RNA polymerase</keyword>
<keyword id="KW-0460">Magnesium</keyword>
<keyword id="KW-0479">Metal-binding</keyword>
<keyword id="KW-0548">Nucleotidyltransferase</keyword>
<keyword id="KW-1185">Reference proteome</keyword>
<keyword id="KW-0804">Transcription</keyword>
<keyword id="KW-0808">Transferase</keyword>
<keyword id="KW-0862">Zinc</keyword>
<gene>
    <name evidence="1" type="primary">rpoC</name>
    <name type="ordered locus">SSP2212</name>
</gene>